<name>BPIB6_HUMAN</name>
<accession>Q8NFQ5</accession>
<feature type="signal peptide" evidence="2">
    <location>
        <begin position="1"/>
        <end position="18"/>
    </location>
</feature>
<feature type="chain" id="PRO_0000017168" description="BPI fold-containing family B member 6">
    <location>
        <begin position="19"/>
        <end position="453"/>
    </location>
</feature>
<feature type="glycosylation site" description="N-linked (GlcNAc...) asparagine" evidence="2">
    <location>
        <position position="114"/>
    </location>
</feature>
<feature type="glycosylation site" description="N-linked (GlcNAc...) asparagine" evidence="2">
    <location>
        <position position="190"/>
    </location>
</feature>
<feature type="disulfide bond" evidence="1">
    <location>
        <begin position="137"/>
        <end position="174"/>
    </location>
</feature>
<feature type="sequence variant" id="VAR_033632" description="In dbSNP:rs17301126.">
    <original>T</original>
    <variation>M</variation>
    <location>
        <position position="16"/>
    </location>
</feature>
<feature type="sequence variant" id="VAR_024518" description="In dbSNP:rs2070317.">
    <original>V</original>
    <variation>I</variation>
    <location>
        <position position="97"/>
    </location>
</feature>
<feature type="sequence variant" id="VAR_033633" description="In dbSNP:rs11907355.">
    <original>P</original>
    <variation>T</variation>
    <location>
        <position position="149"/>
    </location>
</feature>
<feature type="sequence variant" id="VAR_065088" description="De novo variant found in a patient with intellectual disability; dbSNP:rs79809934." evidence="3">
    <original>R</original>
    <variation>H</variation>
    <location>
        <position position="296"/>
    </location>
</feature>
<feature type="sequence variant" id="VAR_033634" description="In dbSNP:rs4911287.">
    <original>S</original>
    <variation>G</variation>
    <location>
        <position position="347"/>
    </location>
</feature>
<comment type="subcellular location">
    <subcellularLocation>
        <location evidence="1">Secreted</location>
    </subcellularLocation>
</comment>
<comment type="tissue specificity">
    <text>Detected at very low levels in normal tonsils, and at higher levels in hypertrophic tonsils.</text>
</comment>
<comment type="similarity">
    <text evidence="4">Belongs to the BPI/LBP/Plunc superfamily. BPI/LBP family.</text>
</comment>
<organism>
    <name type="scientific">Homo sapiens</name>
    <name type="common">Human</name>
    <dbReference type="NCBI Taxonomy" id="9606"/>
    <lineage>
        <taxon>Eukaryota</taxon>
        <taxon>Metazoa</taxon>
        <taxon>Chordata</taxon>
        <taxon>Craniata</taxon>
        <taxon>Vertebrata</taxon>
        <taxon>Euteleostomi</taxon>
        <taxon>Mammalia</taxon>
        <taxon>Eutheria</taxon>
        <taxon>Euarchontoglires</taxon>
        <taxon>Primates</taxon>
        <taxon>Haplorrhini</taxon>
        <taxon>Catarrhini</taxon>
        <taxon>Hominidae</taxon>
        <taxon>Homo</taxon>
    </lineage>
</organism>
<dbReference type="EMBL" id="AF465767">
    <property type="protein sequence ID" value="AAM73985.1"/>
    <property type="molecule type" value="mRNA"/>
</dbReference>
<dbReference type="EMBL" id="AL121756">
    <property type="status" value="NOT_ANNOTATED_CDS"/>
    <property type="molecule type" value="Genomic_DNA"/>
</dbReference>
<dbReference type="CCDS" id="CCDS13211.1"/>
<dbReference type="RefSeq" id="NP_777557.1">
    <property type="nucleotide sequence ID" value="NM_174897.2"/>
</dbReference>
<dbReference type="SMR" id="Q8NFQ5"/>
<dbReference type="BioGRID" id="126166">
    <property type="interactions" value="204"/>
</dbReference>
<dbReference type="FunCoup" id="Q8NFQ5">
    <property type="interactions" value="8"/>
</dbReference>
<dbReference type="IntAct" id="Q8NFQ5">
    <property type="interactions" value="1"/>
</dbReference>
<dbReference type="STRING" id="9606.ENSP00000344929"/>
<dbReference type="GlyCosmos" id="Q8NFQ5">
    <property type="glycosylation" value="2 sites, No reported glycans"/>
</dbReference>
<dbReference type="GlyGen" id="Q8NFQ5">
    <property type="glycosylation" value="3 sites, 1 O-linked glycan (1 site)"/>
</dbReference>
<dbReference type="iPTMnet" id="Q8NFQ5"/>
<dbReference type="PhosphoSitePlus" id="Q8NFQ5"/>
<dbReference type="BioMuta" id="BPIFB6"/>
<dbReference type="DMDM" id="34395537"/>
<dbReference type="jPOST" id="Q8NFQ5"/>
<dbReference type="MassIVE" id="Q8NFQ5"/>
<dbReference type="PaxDb" id="9606-ENSP00000344929"/>
<dbReference type="PeptideAtlas" id="Q8NFQ5"/>
<dbReference type="Antibodypedia" id="25493">
    <property type="antibodies" value="64 antibodies from 13 providers"/>
</dbReference>
<dbReference type="DNASU" id="128859"/>
<dbReference type="Ensembl" id="ENST00000349552.1">
    <property type="protein sequence ID" value="ENSP00000344929.1"/>
    <property type="gene ID" value="ENSG00000167104.11"/>
</dbReference>
<dbReference type="GeneID" id="128859"/>
<dbReference type="KEGG" id="hsa:128859"/>
<dbReference type="MANE-Select" id="ENST00000349552.1">
    <property type="protein sequence ID" value="ENSP00000344929.1"/>
    <property type="RefSeq nucleotide sequence ID" value="NM_174897.2"/>
    <property type="RefSeq protein sequence ID" value="NP_777557.1"/>
</dbReference>
<dbReference type="UCSC" id="uc010zuc.2">
    <property type="organism name" value="human"/>
</dbReference>
<dbReference type="AGR" id="HGNC:16504"/>
<dbReference type="CTD" id="128859"/>
<dbReference type="GeneCards" id="BPIFB6"/>
<dbReference type="HGNC" id="HGNC:16504">
    <property type="gene designation" value="BPIFB6"/>
</dbReference>
<dbReference type="HPA" id="ENSG00000167104">
    <property type="expression patterns" value="Tissue enriched (salivary)"/>
</dbReference>
<dbReference type="MIM" id="614110">
    <property type="type" value="gene"/>
</dbReference>
<dbReference type="neXtProt" id="NX_Q8NFQ5"/>
<dbReference type="PharmGKB" id="PA25406"/>
<dbReference type="VEuPathDB" id="HostDB:ENSG00000167104"/>
<dbReference type="eggNOG" id="KOG4160">
    <property type="taxonomic scope" value="Eukaryota"/>
</dbReference>
<dbReference type="GeneTree" id="ENSGT01100000263546"/>
<dbReference type="HOGENOM" id="CLU_031635_1_0_1"/>
<dbReference type="InParanoid" id="Q8NFQ5"/>
<dbReference type="OMA" id="FNLKVQY"/>
<dbReference type="OrthoDB" id="9623596at2759"/>
<dbReference type="PAN-GO" id="Q8NFQ5">
    <property type="GO annotations" value="0 GO annotations based on evolutionary models"/>
</dbReference>
<dbReference type="PhylomeDB" id="Q8NFQ5"/>
<dbReference type="TreeFam" id="TF315617"/>
<dbReference type="PathwayCommons" id="Q8NFQ5"/>
<dbReference type="Reactome" id="R-HSA-6803157">
    <property type="pathway name" value="Antimicrobial peptides"/>
</dbReference>
<dbReference type="SignaLink" id="Q8NFQ5"/>
<dbReference type="BioGRID-ORCS" id="128859">
    <property type="hits" value="13 hits in 1140 CRISPR screens"/>
</dbReference>
<dbReference type="GenomeRNAi" id="128859"/>
<dbReference type="Pharos" id="Q8NFQ5">
    <property type="development level" value="Tdark"/>
</dbReference>
<dbReference type="PRO" id="PR:Q8NFQ5"/>
<dbReference type="Proteomes" id="UP000005640">
    <property type="component" value="Chromosome 20"/>
</dbReference>
<dbReference type="RNAct" id="Q8NFQ5">
    <property type="molecule type" value="protein"/>
</dbReference>
<dbReference type="Bgee" id="ENSG00000167104">
    <property type="expression patterns" value="Expressed in olfactory segment of nasal mucosa and 4 other cell types or tissues"/>
</dbReference>
<dbReference type="ExpressionAtlas" id="Q8NFQ5">
    <property type="expression patterns" value="baseline and differential"/>
</dbReference>
<dbReference type="GO" id="GO:0005576">
    <property type="term" value="C:extracellular region"/>
    <property type="evidence" value="ECO:0007669"/>
    <property type="project" value="UniProtKB-SubCell"/>
</dbReference>
<dbReference type="GO" id="GO:0008289">
    <property type="term" value="F:lipid binding"/>
    <property type="evidence" value="ECO:0007669"/>
    <property type="project" value="InterPro"/>
</dbReference>
<dbReference type="CDD" id="cd00025">
    <property type="entry name" value="BPI1"/>
    <property type="match status" value="1"/>
</dbReference>
<dbReference type="Gene3D" id="3.15.10.10">
    <property type="entry name" value="Bactericidal permeability-increasing protein, domain 1"/>
    <property type="match status" value="1"/>
</dbReference>
<dbReference type="Gene3D" id="3.15.20.10">
    <property type="entry name" value="Bactericidal permeability-increasing protein, domain 2"/>
    <property type="match status" value="1"/>
</dbReference>
<dbReference type="InterPro" id="IPR017943">
    <property type="entry name" value="Bactericidal_perm-incr_a/b_dom"/>
</dbReference>
<dbReference type="InterPro" id="IPR051660">
    <property type="entry name" value="BPI_fold-BPI/LBP"/>
</dbReference>
<dbReference type="InterPro" id="IPR001124">
    <property type="entry name" value="Lipid-bd_serum_glycop_C"/>
</dbReference>
<dbReference type="InterPro" id="IPR017942">
    <property type="entry name" value="Lipid-bd_serum_glycop_N"/>
</dbReference>
<dbReference type="PANTHER" id="PTHR46019">
    <property type="entry name" value="BPI FOLD-CONTAINING FAMILY B MEMBER 4-RELATED"/>
    <property type="match status" value="1"/>
</dbReference>
<dbReference type="PANTHER" id="PTHR46019:SF2">
    <property type="entry name" value="BPI FOLD-CONTAINING FAMILY B MEMBER 6"/>
    <property type="match status" value="1"/>
</dbReference>
<dbReference type="Pfam" id="PF01273">
    <property type="entry name" value="LBP_BPI_CETP"/>
    <property type="match status" value="1"/>
</dbReference>
<dbReference type="Pfam" id="PF02886">
    <property type="entry name" value="LBP_BPI_CETP_C"/>
    <property type="match status" value="1"/>
</dbReference>
<dbReference type="SMART" id="SM00329">
    <property type="entry name" value="BPI2"/>
    <property type="match status" value="1"/>
</dbReference>
<dbReference type="SUPFAM" id="SSF55394">
    <property type="entry name" value="Bactericidal permeability-increasing protein, BPI"/>
    <property type="match status" value="2"/>
</dbReference>
<reference key="1">
    <citation type="journal article" date="2002" name="Immunogenetics">
        <title>Three new human members of the lipid transfer/lipopolysaccharide binding protein family (LT/LBP).</title>
        <authorList>
            <person name="Mulero J.J."/>
            <person name="Boyle B.J."/>
            <person name="Bradley S."/>
            <person name="Bright J.M."/>
            <person name="Nelken S.T."/>
            <person name="Ho T.T."/>
            <person name="Mize N.K."/>
            <person name="Childs J.D."/>
            <person name="Ballinger D.G."/>
            <person name="Ford J.E."/>
            <person name="Rupp F."/>
        </authorList>
    </citation>
    <scope>NUCLEOTIDE SEQUENCE [MRNA]</scope>
    <source>
        <tissue>Tonsil</tissue>
    </source>
</reference>
<reference key="2">
    <citation type="journal article" date="2001" name="Nature">
        <title>The DNA sequence and comparative analysis of human chromosome 20.</title>
        <authorList>
            <person name="Deloukas P."/>
            <person name="Matthews L.H."/>
            <person name="Ashurst J.L."/>
            <person name="Burton J."/>
            <person name="Gilbert J.G.R."/>
            <person name="Jones M."/>
            <person name="Stavrides G."/>
            <person name="Almeida J.P."/>
            <person name="Babbage A.K."/>
            <person name="Bagguley C.L."/>
            <person name="Bailey J."/>
            <person name="Barlow K.F."/>
            <person name="Bates K.N."/>
            <person name="Beard L.M."/>
            <person name="Beare D.M."/>
            <person name="Beasley O.P."/>
            <person name="Bird C.P."/>
            <person name="Blakey S.E."/>
            <person name="Bridgeman A.M."/>
            <person name="Brown A.J."/>
            <person name="Buck D."/>
            <person name="Burrill W.D."/>
            <person name="Butler A.P."/>
            <person name="Carder C."/>
            <person name="Carter N.P."/>
            <person name="Chapman J.C."/>
            <person name="Clamp M."/>
            <person name="Clark G."/>
            <person name="Clark L.N."/>
            <person name="Clark S.Y."/>
            <person name="Clee C.M."/>
            <person name="Clegg S."/>
            <person name="Cobley V.E."/>
            <person name="Collier R.E."/>
            <person name="Connor R.E."/>
            <person name="Corby N.R."/>
            <person name="Coulson A."/>
            <person name="Coville G.J."/>
            <person name="Deadman R."/>
            <person name="Dhami P.D."/>
            <person name="Dunn M."/>
            <person name="Ellington A.G."/>
            <person name="Frankland J.A."/>
            <person name="Fraser A."/>
            <person name="French L."/>
            <person name="Garner P."/>
            <person name="Grafham D.V."/>
            <person name="Griffiths C."/>
            <person name="Griffiths M.N.D."/>
            <person name="Gwilliam R."/>
            <person name="Hall R.E."/>
            <person name="Hammond S."/>
            <person name="Harley J.L."/>
            <person name="Heath P.D."/>
            <person name="Ho S."/>
            <person name="Holden J.L."/>
            <person name="Howden P.J."/>
            <person name="Huckle E."/>
            <person name="Hunt A.R."/>
            <person name="Hunt S.E."/>
            <person name="Jekosch K."/>
            <person name="Johnson C.M."/>
            <person name="Johnson D."/>
            <person name="Kay M.P."/>
            <person name="Kimberley A.M."/>
            <person name="King A."/>
            <person name="Knights A."/>
            <person name="Laird G.K."/>
            <person name="Lawlor S."/>
            <person name="Lehvaeslaiho M.H."/>
            <person name="Leversha M.A."/>
            <person name="Lloyd C."/>
            <person name="Lloyd D.M."/>
            <person name="Lovell J.D."/>
            <person name="Marsh V.L."/>
            <person name="Martin S.L."/>
            <person name="McConnachie L.J."/>
            <person name="McLay K."/>
            <person name="McMurray A.A."/>
            <person name="Milne S.A."/>
            <person name="Mistry D."/>
            <person name="Moore M.J.F."/>
            <person name="Mullikin J.C."/>
            <person name="Nickerson T."/>
            <person name="Oliver K."/>
            <person name="Parker A."/>
            <person name="Patel R."/>
            <person name="Pearce T.A.V."/>
            <person name="Peck A.I."/>
            <person name="Phillimore B.J.C.T."/>
            <person name="Prathalingam S.R."/>
            <person name="Plumb R.W."/>
            <person name="Ramsay H."/>
            <person name="Rice C.M."/>
            <person name="Ross M.T."/>
            <person name="Scott C.E."/>
            <person name="Sehra H.K."/>
            <person name="Shownkeen R."/>
            <person name="Sims S."/>
            <person name="Skuce C.D."/>
            <person name="Smith M.L."/>
            <person name="Soderlund C."/>
            <person name="Steward C.A."/>
            <person name="Sulston J.E."/>
            <person name="Swann R.M."/>
            <person name="Sycamore N."/>
            <person name="Taylor R."/>
            <person name="Tee L."/>
            <person name="Thomas D.W."/>
            <person name="Thorpe A."/>
            <person name="Tracey A."/>
            <person name="Tromans A.C."/>
            <person name="Vaudin M."/>
            <person name="Wall M."/>
            <person name="Wallis J.M."/>
            <person name="Whitehead S.L."/>
            <person name="Whittaker P."/>
            <person name="Willey D.L."/>
            <person name="Williams L."/>
            <person name="Williams S.A."/>
            <person name="Wilming L."/>
            <person name="Wray P.W."/>
            <person name="Hubbard T."/>
            <person name="Durbin R.M."/>
            <person name="Bentley D.R."/>
            <person name="Beck S."/>
            <person name="Rogers J."/>
        </authorList>
    </citation>
    <scope>NUCLEOTIDE SEQUENCE [LARGE SCALE GENOMIC DNA]</scope>
</reference>
<reference key="3">
    <citation type="journal article" date="2009" name="Sci. Signal.">
        <title>Quantitative phosphoproteomic analysis of T cell receptor signaling reveals system-wide modulation of protein-protein interactions.</title>
        <authorList>
            <person name="Mayya V."/>
            <person name="Lundgren D.H."/>
            <person name="Hwang S.-I."/>
            <person name="Rezaul K."/>
            <person name="Wu L."/>
            <person name="Eng J.K."/>
            <person name="Rodionov V."/>
            <person name="Han D.K."/>
        </authorList>
    </citation>
    <scope>IDENTIFICATION BY MASS SPECTROMETRY [LARGE SCALE ANALYSIS]</scope>
    <source>
        <tissue>Leukemic T-cell</tissue>
    </source>
</reference>
<reference key="4">
    <citation type="journal article" date="2010" name="Nat. Genet.">
        <title>A de novo paradigm for mental retardation.</title>
        <authorList>
            <person name="Vissers L.E."/>
            <person name="de Ligt J."/>
            <person name="Gilissen C."/>
            <person name="Janssen I."/>
            <person name="Steehouwer M."/>
            <person name="de Vries P."/>
            <person name="van Lier B."/>
            <person name="Arts P."/>
            <person name="Wieskamp N."/>
            <person name="del Rosario M."/>
            <person name="van Bon B.W."/>
            <person name="Hoischen A."/>
            <person name="de Vries B.B."/>
            <person name="Brunner H.G."/>
            <person name="Veltman J.A."/>
        </authorList>
    </citation>
    <scope>VARIANT HIS-296</scope>
</reference>
<protein>
    <recommendedName>
        <fullName>BPI fold-containing family B member 6</fullName>
    </recommendedName>
    <alternativeName>
        <fullName>Bactericidal/permeability-increasing protein-like 3</fullName>
    </alternativeName>
</protein>
<keyword id="KW-1015">Disulfide bond</keyword>
<keyword id="KW-0325">Glycoprotein</keyword>
<keyword id="KW-1267">Proteomics identification</keyword>
<keyword id="KW-1185">Reference proteome</keyword>
<keyword id="KW-0964">Secreted</keyword>
<keyword id="KW-0732">Signal</keyword>
<sequence length="453" mass="49717">MLRILCLALCSLLTGTRADPGALLRLGMDIMNQVQSAMDESHILEKMAAEAGKKQPGMKPIKGITNLKVKDVQLPVITLNFVPGVGIFQCVSTGMTVTGKSFMGGNMEIIVALNITATNRLLRDEETGLPVFKSEGCEVILVNVKTNLPSNMLPKMVNKFLDSTLHKVLPGLMCPAIDAVLVYVNRKWTNLSDPMPVGQMGTVKYVLMSAPATTASYIQLDFSPVVQQQKGKTIKLADAGEALTFPEGYAKGSSQLLLPATFLSAELALLQKSFHVNIQDTMIGELPPQTTKTLARFIPEVAVAYPKSKPLTTQIKIKKPPKVTMKTGKSLLHLHSTLEMFAARWRSKAPMSLFLLEVHFNLKVQYSVHENQLQMATSLDRLLSLSRKSSSIGNFNERELTGFITSYLEEAYIPVVNDVLQVGLPLPDFLAMNYNLAELDIVENALMLDLKLG</sequence>
<gene>
    <name type="primary">BPIFB6</name>
    <name type="synonym">BPIL3</name>
</gene>
<evidence type="ECO:0000250" key="1"/>
<evidence type="ECO:0000255" key="2"/>
<evidence type="ECO:0000269" key="3">
    <source>
    </source>
</evidence>
<evidence type="ECO:0000305" key="4"/>
<proteinExistence type="evidence at protein level"/>